<comment type="function">
    <text evidence="1">Catalyzes the reversible reaction in which hydroxymethyl group from 5,10-methylenetetrahydrofolate is transferred onto alpha-ketoisovalerate to form ketopantoate.</text>
</comment>
<comment type="catalytic activity">
    <reaction evidence="1">
        <text>3-methyl-2-oxobutanoate + (6R)-5,10-methylene-5,6,7,8-tetrahydrofolate + H2O = 2-dehydropantoate + (6S)-5,6,7,8-tetrahydrofolate</text>
        <dbReference type="Rhea" id="RHEA:11824"/>
        <dbReference type="ChEBI" id="CHEBI:11561"/>
        <dbReference type="ChEBI" id="CHEBI:11851"/>
        <dbReference type="ChEBI" id="CHEBI:15377"/>
        <dbReference type="ChEBI" id="CHEBI:15636"/>
        <dbReference type="ChEBI" id="CHEBI:57453"/>
        <dbReference type="EC" id="2.1.2.11"/>
    </reaction>
</comment>
<comment type="cofactor">
    <cofactor evidence="1">
        <name>Mg(2+)</name>
        <dbReference type="ChEBI" id="CHEBI:18420"/>
    </cofactor>
    <text evidence="1">Binds 1 Mg(2+) ion per subunit.</text>
</comment>
<comment type="pathway">
    <text evidence="1">Cofactor biosynthesis; (R)-pantothenate biosynthesis; (R)-pantoate from 3-methyl-2-oxobutanoate: step 1/2.</text>
</comment>
<comment type="subunit">
    <text evidence="1">Homodecamer; pentamer of dimers.</text>
</comment>
<comment type="subcellular location">
    <subcellularLocation>
        <location evidence="1">Cytoplasm</location>
    </subcellularLocation>
</comment>
<comment type="similarity">
    <text evidence="1">Belongs to the PanB family.</text>
</comment>
<keyword id="KW-0963">Cytoplasm</keyword>
<keyword id="KW-0460">Magnesium</keyword>
<keyword id="KW-0479">Metal-binding</keyword>
<keyword id="KW-0566">Pantothenate biosynthesis</keyword>
<keyword id="KW-1185">Reference proteome</keyword>
<keyword id="KW-0808">Transferase</keyword>
<organism>
    <name type="scientific">Maricaulis maris (strain MCS10)</name>
    <name type="common">Caulobacter maris</name>
    <dbReference type="NCBI Taxonomy" id="394221"/>
    <lineage>
        <taxon>Bacteria</taxon>
        <taxon>Pseudomonadati</taxon>
        <taxon>Pseudomonadota</taxon>
        <taxon>Alphaproteobacteria</taxon>
        <taxon>Maricaulales</taxon>
        <taxon>Maricaulaceae</taxon>
        <taxon>Maricaulis</taxon>
    </lineage>
</organism>
<dbReference type="EC" id="2.1.2.11" evidence="1"/>
<dbReference type="EMBL" id="CP000449">
    <property type="protein sequence ID" value="ABI65493.1"/>
    <property type="molecule type" value="Genomic_DNA"/>
</dbReference>
<dbReference type="RefSeq" id="WP_011643140.1">
    <property type="nucleotide sequence ID" value="NC_008347.1"/>
</dbReference>
<dbReference type="SMR" id="Q0AQE4"/>
<dbReference type="STRING" id="394221.Mmar10_1200"/>
<dbReference type="KEGG" id="mmr:Mmar10_1200"/>
<dbReference type="eggNOG" id="COG0413">
    <property type="taxonomic scope" value="Bacteria"/>
</dbReference>
<dbReference type="HOGENOM" id="CLU_036645_1_0_5"/>
<dbReference type="OrthoDB" id="9781789at2"/>
<dbReference type="UniPathway" id="UPA00028">
    <property type="reaction ID" value="UER00003"/>
</dbReference>
<dbReference type="Proteomes" id="UP000001964">
    <property type="component" value="Chromosome"/>
</dbReference>
<dbReference type="GO" id="GO:0005737">
    <property type="term" value="C:cytoplasm"/>
    <property type="evidence" value="ECO:0007669"/>
    <property type="project" value="UniProtKB-SubCell"/>
</dbReference>
<dbReference type="GO" id="GO:0003864">
    <property type="term" value="F:3-methyl-2-oxobutanoate hydroxymethyltransferase activity"/>
    <property type="evidence" value="ECO:0007669"/>
    <property type="project" value="UniProtKB-UniRule"/>
</dbReference>
<dbReference type="GO" id="GO:0000287">
    <property type="term" value="F:magnesium ion binding"/>
    <property type="evidence" value="ECO:0007669"/>
    <property type="project" value="TreeGrafter"/>
</dbReference>
<dbReference type="GO" id="GO:0015940">
    <property type="term" value="P:pantothenate biosynthetic process"/>
    <property type="evidence" value="ECO:0007669"/>
    <property type="project" value="UniProtKB-UniRule"/>
</dbReference>
<dbReference type="CDD" id="cd06557">
    <property type="entry name" value="KPHMT-like"/>
    <property type="match status" value="1"/>
</dbReference>
<dbReference type="FunFam" id="3.20.20.60:FF:000003">
    <property type="entry name" value="3-methyl-2-oxobutanoate hydroxymethyltransferase"/>
    <property type="match status" value="1"/>
</dbReference>
<dbReference type="Gene3D" id="3.20.20.60">
    <property type="entry name" value="Phosphoenolpyruvate-binding domains"/>
    <property type="match status" value="1"/>
</dbReference>
<dbReference type="HAMAP" id="MF_00156">
    <property type="entry name" value="PanB"/>
    <property type="match status" value="1"/>
</dbReference>
<dbReference type="InterPro" id="IPR003700">
    <property type="entry name" value="Pantoate_hydroxy_MeTrfase"/>
</dbReference>
<dbReference type="InterPro" id="IPR015813">
    <property type="entry name" value="Pyrv/PenolPyrv_kinase-like_dom"/>
</dbReference>
<dbReference type="InterPro" id="IPR040442">
    <property type="entry name" value="Pyrv_kinase-like_dom_sf"/>
</dbReference>
<dbReference type="NCBIfam" id="TIGR00222">
    <property type="entry name" value="panB"/>
    <property type="match status" value="1"/>
</dbReference>
<dbReference type="NCBIfam" id="NF001452">
    <property type="entry name" value="PRK00311.1"/>
    <property type="match status" value="1"/>
</dbReference>
<dbReference type="PANTHER" id="PTHR20881">
    <property type="entry name" value="3-METHYL-2-OXOBUTANOATE HYDROXYMETHYLTRANSFERASE"/>
    <property type="match status" value="1"/>
</dbReference>
<dbReference type="PANTHER" id="PTHR20881:SF0">
    <property type="entry name" value="3-METHYL-2-OXOBUTANOATE HYDROXYMETHYLTRANSFERASE"/>
    <property type="match status" value="1"/>
</dbReference>
<dbReference type="Pfam" id="PF02548">
    <property type="entry name" value="Pantoate_transf"/>
    <property type="match status" value="1"/>
</dbReference>
<dbReference type="PIRSF" id="PIRSF000388">
    <property type="entry name" value="Pantoate_hydroxy_MeTrfase"/>
    <property type="match status" value="1"/>
</dbReference>
<dbReference type="SUPFAM" id="SSF51621">
    <property type="entry name" value="Phosphoenolpyruvate/pyruvate domain"/>
    <property type="match status" value="1"/>
</dbReference>
<gene>
    <name evidence="1" type="primary">panB</name>
    <name type="ordered locus">Mmar10_1200</name>
</gene>
<sequence length="279" mass="29875">MSAQSKSPTKARRITAPDIRARKGGEPLVCLTAYDAPMARILDPHCDLLLVGDSVGMVVHGLDSTVGVTLDMMILHGQAVMRGARQALVAVDMPFGSYEQSPEQAFANAARVMAETGCQAIKIESGTYAADTIRFMAARSIPVIGHIGLRPQAALADGGFRAKGRTQAERQRVIDEALATAEAGAFAIVIEGVAEDLAREITETVDVPTIGIGASAACDGQILVTQDMLGVFDWTPKFVKRYDNMAERTDAAVAQFASDVRDRSFPSQREVYTMKRSDG</sequence>
<feature type="chain" id="PRO_0000297292" description="3-methyl-2-oxobutanoate hydroxymethyltransferase">
    <location>
        <begin position="1"/>
        <end position="279"/>
    </location>
</feature>
<feature type="active site" description="Proton acceptor" evidence="1">
    <location>
        <position position="191"/>
    </location>
</feature>
<feature type="binding site" evidence="1">
    <location>
        <begin position="53"/>
        <end position="54"/>
    </location>
    <ligand>
        <name>3-methyl-2-oxobutanoate</name>
        <dbReference type="ChEBI" id="CHEBI:11851"/>
    </ligand>
</feature>
<feature type="binding site" evidence="1">
    <location>
        <position position="53"/>
    </location>
    <ligand>
        <name>Mg(2+)</name>
        <dbReference type="ChEBI" id="CHEBI:18420"/>
    </ligand>
</feature>
<feature type="binding site" evidence="1">
    <location>
        <position position="92"/>
    </location>
    <ligand>
        <name>3-methyl-2-oxobutanoate</name>
        <dbReference type="ChEBI" id="CHEBI:11851"/>
    </ligand>
</feature>
<feature type="binding site" evidence="1">
    <location>
        <position position="92"/>
    </location>
    <ligand>
        <name>Mg(2+)</name>
        <dbReference type="ChEBI" id="CHEBI:18420"/>
    </ligand>
</feature>
<feature type="binding site" evidence="1">
    <location>
        <position position="122"/>
    </location>
    <ligand>
        <name>3-methyl-2-oxobutanoate</name>
        <dbReference type="ChEBI" id="CHEBI:11851"/>
    </ligand>
</feature>
<feature type="binding site" evidence="1">
    <location>
        <position position="124"/>
    </location>
    <ligand>
        <name>Mg(2+)</name>
        <dbReference type="ChEBI" id="CHEBI:18420"/>
    </ligand>
</feature>
<evidence type="ECO:0000255" key="1">
    <source>
        <dbReference type="HAMAP-Rule" id="MF_00156"/>
    </source>
</evidence>
<reference key="1">
    <citation type="submission" date="2006-08" db="EMBL/GenBank/DDBJ databases">
        <title>Complete sequence of Maricaulis maris MCS10.</title>
        <authorList>
            <consortium name="US DOE Joint Genome Institute"/>
            <person name="Copeland A."/>
            <person name="Lucas S."/>
            <person name="Lapidus A."/>
            <person name="Barry K."/>
            <person name="Detter J.C."/>
            <person name="Glavina del Rio T."/>
            <person name="Hammon N."/>
            <person name="Israni S."/>
            <person name="Dalin E."/>
            <person name="Tice H."/>
            <person name="Pitluck S."/>
            <person name="Saunders E."/>
            <person name="Brettin T."/>
            <person name="Bruce D."/>
            <person name="Han C."/>
            <person name="Tapia R."/>
            <person name="Gilna P."/>
            <person name="Schmutz J."/>
            <person name="Larimer F."/>
            <person name="Land M."/>
            <person name="Hauser L."/>
            <person name="Kyrpides N."/>
            <person name="Mikhailova N."/>
            <person name="Viollier P."/>
            <person name="Stephens C."/>
            <person name="Richardson P."/>
        </authorList>
    </citation>
    <scope>NUCLEOTIDE SEQUENCE [LARGE SCALE GENOMIC DNA]</scope>
    <source>
        <strain>MCS10</strain>
    </source>
</reference>
<name>PANB_MARMM</name>
<protein>
    <recommendedName>
        <fullName evidence="1">3-methyl-2-oxobutanoate hydroxymethyltransferase</fullName>
        <ecNumber evidence="1">2.1.2.11</ecNumber>
    </recommendedName>
    <alternativeName>
        <fullName evidence="1">Ketopantoate hydroxymethyltransferase</fullName>
        <shortName evidence="1">KPHMT</shortName>
    </alternativeName>
</protein>
<proteinExistence type="inferred from homology"/>
<accession>Q0AQE4</accession>